<reference key="1">
    <citation type="journal article" date="2009" name="PLoS Genet.">
        <title>Organised genome dynamics in the Escherichia coli species results in highly diverse adaptive paths.</title>
        <authorList>
            <person name="Touchon M."/>
            <person name="Hoede C."/>
            <person name="Tenaillon O."/>
            <person name="Barbe V."/>
            <person name="Baeriswyl S."/>
            <person name="Bidet P."/>
            <person name="Bingen E."/>
            <person name="Bonacorsi S."/>
            <person name="Bouchier C."/>
            <person name="Bouvet O."/>
            <person name="Calteau A."/>
            <person name="Chiapello H."/>
            <person name="Clermont O."/>
            <person name="Cruveiller S."/>
            <person name="Danchin A."/>
            <person name="Diard M."/>
            <person name="Dossat C."/>
            <person name="Karoui M.E."/>
            <person name="Frapy E."/>
            <person name="Garry L."/>
            <person name="Ghigo J.M."/>
            <person name="Gilles A.M."/>
            <person name="Johnson J."/>
            <person name="Le Bouguenec C."/>
            <person name="Lescat M."/>
            <person name="Mangenot S."/>
            <person name="Martinez-Jehanne V."/>
            <person name="Matic I."/>
            <person name="Nassif X."/>
            <person name="Oztas S."/>
            <person name="Petit M.A."/>
            <person name="Pichon C."/>
            <person name="Rouy Z."/>
            <person name="Ruf C.S."/>
            <person name="Schneider D."/>
            <person name="Tourret J."/>
            <person name="Vacherie B."/>
            <person name="Vallenet D."/>
            <person name="Medigue C."/>
            <person name="Rocha E.P.C."/>
            <person name="Denamur E."/>
        </authorList>
    </citation>
    <scope>NUCLEOTIDE SEQUENCE [LARGE SCALE GENOMIC DNA]</scope>
    <source>
        <strain>S88 / ExPEC</strain>
    </source>
</reference>
<gene>
    <name evidence="1" type="primary">rplX</name>
    <name type="ordered locus">ECS88_3696</name>
</gene>
<sequence>MAAKIRRDDEVIVLTGKDKGKRGKVKNVLSSGKVIVEGINLVKKHQKPVPALNQPGGIVEKEAAIQVSNVAIFNATTGKADRVGFRFEDGKKVRFFKSNSETIK</sequence>
<proteinExistence type="inferred from homology"/>
<dbReference type="EMBL" id="CU928161">
    <property type="protein sequence ID" value="CAR04913.1"/>
    <property type="molecule type" value="Genomic_DNA"/>
</dbReference>
<dbReference type="RefSeq" id="WP_000729186.1">
    <property type="nucleotide sequence ID" value="NC_011742.1"/>
</dbReference>
<dbReference type="SMR" id="B7MCS4"/>
<dbReference type="KEGG" id="ecz:ECS88_3696"/>
<dbReference type="HOGENOM" id="CLU_093315_2_2_6"/>
<dbReference type="Proteomes" id="UP000000747">
    <property type="component" value="Chromosome"/>
</dbReference>
<dbReference type="GO" id="GO:0005829">
    <property type="term" value="C:cytosol"/>
    <property type="evidence" value="ECO:0007669"/>
    <property type="project" value="UniProtKB-ARBA"/>
</dbReference>
<dbReference type="GO" id="GO:1990904">
    <property type="term" value="C:ribonucleoprotein complex"/>
    <property type="evidence" value="ECO:0007669"/>
    <property type="project" value="UniProtKB-KW"/>
</dbReference>
<dbReference type="GO" id="GO:0005840">
    <property type="term" value="C:ribosome"/>
    <property type="evidence" value="ECO:0007669"/>
    <property type="project" value="UniProtKB-KW"/>
</dbReference>
<dbReference type="GO" id="GO:0019843">
    <property type="term" value="F:rRNA binding"/>
    <property type="evidence" value="ECO:0007669"/>
    <property type="project" value="UniProtKB-UniRule"/>
</dbReference>
<dbReference type="GO" id="GO:0003735">
    <property type="term" value="F:structural constituent of ribosome"/>
    <property type="evidence" value="ECO:0007669"/>
    <property type="project" value="InterPro"/>
</dbReference>
<dbReference type="GO" id="GO:0006412">
    <property type="term" value="P:translation"/>
    <property type="evidence" value="ECO:0007669"/>
    <property type="project" value="UniProtKB-UniRule"/>
</dbReference>
<dbReference type="CDD" id="cd06089">
    <property type="entry name" value="KOW_RPL26"/>
    <property type="match status" value="1"/>
</dbReference>
<dbReference type="FunFam" id="2.30.30.30:FF:000004">
    <property type="entry name" value="50S ribosomal protein L24"/>
    <property type="match status" value="1"/>
</dbReference>
<dbReference type="Gene3D" id="2.30.30.30">
    <property type="match status" value="1"/>
</dbReference>
<dbReference type="HAMAP" id="MF_01326_B">
    <property type="entry name" value="Ribosomal_uL24_B"/>
    <property type="match status" value="1"/>
</dbReference>
<dbReference type="InterPro" id="IPR005824">
    <property type="entry name" value="KOW"/>
</dbReference>
<dbReference type="InterPro" id="IPR014722">
    <property type="entry name" value="Rib_uL2_dom2"/>
</dbReference>
<dbReference type="InterPro" id="IPR003256">
    <property type="entry name" value="Ribosomal_uL24"/>
</dbReference>
<dbReference type="InterPro" id="IPR005825">
    <property type="entry name" value="Ribosomal_uL24_CS"/>
</dbReference>
<dbReference type="InterPro" id="IPR041988">
    <property type="entry name" value="Ribosomal_uL24_KOW"/>
</dbReference>
<dbReference type="InterPro" id="IPR008991">
    <property type="entry name" value="Translation_prot_SH3-like_sf"/>
</dbReference>
<dbReference type="NCBIfam" id="TIGR01079">
    <property type="entry name" value="rplX_bact"/>
    <property type="match status" value="1"/>
</dbReference>
<dbReference type="PANTHER" id="PTHR12903">
    <property type="entry name" value="MITOCHONDRIAL RIBOSOMAL PROTEIN L24"/>
    <property type="match status" value="1"/>
</dbReference>
<dbReference type="Pfam" id="PF00467">
    <property type="entry name" value="KOW"/>
    <property type="match status" value="1"/>
</dbReference>
<dbReference type="Pfam" id="PF17136">
    <property type="entry name" value="ribosomal_L24"/>
    <property type="match status" value="1"/>
</dbReference>
<dbReference type="SMART" id="SM00739">
    <property type="entry name" value="KOW"/>
    <property type="match status" value="1"/>
</dbReference>
<dbReference type="SUPFAM" id="SSF50104">
    <property type="entry name" value="Translation proteins SH3-like domain"/>
    <property type="match status" value="1"/>
</dbReference>
<dbReference type="PROSITE" id="PS01108">
    <property type="entry name" value="RIBOSOMAL_L24"/>
    <property type="match status" value="1"/>
</dbReference>
<comment type="function">
    <text evidence="1">One of two assembly initiator proteins, it binds directly to the 5'-end of the 23S rRNA, where it nucleates assembly of the 50S subunit.</text>
</comment>
<comment type="function">
    <text evidence="1">One of the proteins that surrounds the polypeptide exit tunnel on the outside of the subunit.</text>
</comment>
<comment type="subunit">
    <text evidence="1">Part of the 50S ribosomal subunit.</text>
</comment>
<comment type="similarity">
    <text evidence="1">Belongs to the universal ribosomal protein uL24 family.</text>
</comment>
<accession>B7MCS4</accession>
<protein>
    <recommendedName>
        <fullName evidence="1">Large ribosomal subunit protein uL24</fullName>
    </recommendedName>
    <alternativeName>
        <fullName evidence="2">50S ribosomal protein L24</fullName>
    </alternativeName>
</protein>
<keyword id="KW-1185">Reference proteome</keyword>
<keyword id="KW-0687">Ribonucleoprotein</keyword>
<keyword id="KW-0689">Ribosomal protein</keyword>
<keyword id="KW-0694">RNA-binding</keyword>
<keyword id="KW-0699">rRNA-binding</keyword>
<organism>
    <name type="scientific">Escherichia coli O45:K1 (strain S88 / ExPEC)</name>
    <dbReference type="NCBI Taxonomy" id="585035"/>
    <lineage>
        <taxon>Bacteria</taxon>
        <taxon>Pseudomonadati</taxon>
        <taxon>Pseudomonadota</taxon>
        <taxon>Gammaproteobacteria</taxon>
        <taxon>Enterobacterales</taxon>
        <taxon>Enterobacteriaceae</taxon>
        <taxon>Escherichia</taxon>
    </lineage>
</organism>
<evidence type="ECO:0000255" key="1">
    <source>
        <dbReference type="HAMAP-Rule" id="MF_01326"/>
    </source>
</evidence>
<evidence type="ECO:0000305" key="2"/>
<name>RL24_ECO45</name>
<feature type="chain" id="PRO_1000141989" description="Large ribosomal subunit protein uL24">
    <location>
        <begin position="1"/>
        <end position="104"/>
    </location>
</feature>